<gene>
    <name type="ordered locus">Bpet0439</name>
</gene>
<reference key="1">
    <citation type="journal article" date="2008" name="BMC Genomics">
        <title>The missing link: Bordetella petrii is endowed with both the metabolic versatility of environmental bacteria and virulence traits of pathogenic Bordetellae.</title>
        <authorList>
            <person name="Gross R."/>
            <person name="Guzman C.A."/>
            <person name="Sebaihia M."/>
            <person name="Martin dos Santos V.A.P."/>
            <person name="Pieper D.H."/>
            <person name="Koebnik R."/>
            <person name="Lechner M."/>
            <person name="Bartels D."/>
            <person name="Buhrmester J."/>
            <person name="Choudhuri J.V."/>
            <person name="Ebensen T."/>
            <person name="Gaigalat L."/>
            <person name="Herrmann S."/>
            <person name="Khachane A.N."/>
            <person name="Larisch C."/>
            <person name="Link S."/>
            <person name="Linke B."/>
            <person name="Meyer F."/>
            <person name="Mormann S."/>
            <person name="Nakunst D."/>
            <person name="Rueckert C."/>
            <person name="Schneiker-Bekel S."/>
            <person name="Schulze K."/>
            <person name="Voerholter F.-J."/>
            <person name="Yevsa T."/>
            <person name="Engle J.T."/>
            <person name="Goldman W.E."/>
            <person name="Puehler A."/>
            <person name="Goebel U.B."/>
            <person name="Goesmann A."/>
            <person name="Bloecker H."/>
            <person name="Kaiser O."/>
            <person name="Martinez-Arias R."/>
        </authorList>
    </citation>
    <scope>NUCLEOTIDE SEQUENCE [LARGE SCALE GENOMIC DNA]</scope>
    <source>
        <strain>ATCC BAA-461 / DSM 12804 / CCUG 43448</strain>
    </source>
</reference>
<proteinExistence type="inferred from homology"/>
<protein>
    <recommendedName>
        <fullName evidence="1">UPF0102 protein Bpet0439</fullName>
    </recommendedName>
</protein>
<feature type="chain" id="PRO_0000336134" description="UPF0102 protein Bpet0439">
    <location>
        <begin position="1"/>
        <end position="162"/>
    </location>
</feature>
<feature type="region of interest" description="Disordered" evidence="2">
    <location>
        <begin position="15"/>
        <end position="52"/>
    </location>
</feature>
<feature type="compositionally biased region" description="Basic residues" evidence="2">
    <location>
        <begin position="20"/>
        <end position="32"/>
    </location>
</feature>
<feature type="compositionally biased region" description="Low complexity" evidence="2">
    <location>
        <begin position="33"/>
        <end position="48"/>
    </location>
</feature>
<organism>
    <name type="scientific">Bordetella petrii (strain ATCC BAA-461 / DSM 12804 / CCUG 43448)</name>
    <dbReference type="NCBI Taxonomy" id="340100"/>
    <lineage>
        <taxon>Bacteria</taxon>
        <taxon>Pseudomonadati</taxon>
        <taxon>Pseudomonadota</taxon>
        <taxon>Betaproteobacteria</taxon>
        <taxon>Burkholderiales</taxon>
        <taxon>Alcaligenaceae</taxon>
        <taxon>Bordetella</taxon>
    </lineage>
</organism>
<accession>A9I0M2</accession>
<name>Y439_BORPD</name>
<evidence type="ECO:0000255" key="1">
    <source>
        <dbReference type="HAMAP-Rule" id="MF_00048"/>
    </source>
</evidence>
<evidence type="ECO:0000256" key="2">
    <source>
        <dbReference type="SAM" id="MobiDB-lite"/>
    </source>
</evidence>
<dbReference type="EMBL" id="AM902716">
    <property type="protein sequence ID" value="CAP40771.1"/>
    <property type="molecule type" value="Genomic_DNA"/>
</dbReference>
<dbReference type="SMR" id="A9I0M2"/>
<dbReference type="STRING" id="94624.Bpet0439"/>
<dbReference type="KEGG" id="bpt:Bpet0439"/>
<dbReference type="eggNOG" id="COG0792">
    <property type="taxonomic scope" value="Bacteria"/>
</dbReference>
<dbReference type="Proteomes" id="UP000001225">
    <property type="component" value="Chromosome"/>
</dbReference>
<dbReference type="GO" id="GO:0003676">
    <property type="term" value="F:nucleic acid binding"/>
    <property type="evidence" value="ECO:0007669"/>
    <property type="project" value="InterPro"/>
</dbReference>
<dbReference type="Gene3D" id="3.40.1350.10">
    <property type="match status" value="1"/>
</dbReference>
<dbReference type="HAMAP" id="MF_00048">
    <property type="entry name" value="UPF0102"/>
    <property type="match status" value="1"/>
</dbReference>
<dbReference type="InterPro" id="IPR011335">
    <property type="entry name" value="Restrct_endonuc-II-like"/>
</dbReference>
<dbReference type="InterPro" id="IPR011856">
    <property type="entry name" value="tRNA_endonuc-like_dom_sf"/>
</dbReference>
<dbReference type="InterPro" id="IPR003509">
    <property type="entry name" value="UPF0102_YraN-like"/>
</dbReference>
<dbReference type="NCBIfam" id="NF009150">
    <property type="entry name" value="PRK12497.1-3"/>
    <property type="match status" value="1"/>
</dbReference>
<dbReference type="NCBIfam" id="TIGR00252">
    <property type="entry name" value="YraN family protein"/>
    <property type="match status" value="1"/>
</dbReference>
<dbReference type="PANTHER" id="PTHR34039">
    <property type="entry name" value="UPF0102 PROTEIN YRAN"/>
    <property type="match status" value="1"/>
</dbReference>
<dbReference type="PANTHER" id="PTHR34039:SF1">
    <property type="entry name" value="UPF0102 PROTEIN YRAN"/>
    <property type="match status" value="1"/>
</dbReference>
<dbReference type="Pfam" id="PF02021">
    <property type="entry name" value="UPF0102"/>
    <property type="match status" value="1"/>
</dbReference>
<dbReference type="SUPFAM" id="SSF52980">
    <property type="entry name" value="Restriction endonuclease-like"/>
    <property type="match status" value="1"/>
</dbReference>
<comment type="similarity">
    <text evidence="1">Belongs to the UPF0102 family.</text>
</comment>
<sequence length="162" mass="17714">MSDTFLEIAYERARQAQQRQMKRRRAAAHRAARGPAPARAPRASPTQRTGTAHEDQALRLLAGAGLVPLARNLHCRAGEIDLVMRDGATLVLVEVRARANPRYGGAAASVGRAKRARLLRCAALLLPDLARRHWGGRIPPVRFDVVAFEAGRADWLPAAFTL</sequence>